<comment type="function">
    <text evidence="1">Catalyzes the transfer of a dimethylallyl group onto the adenine at position 37 in tRNAs that read codons beginning with uridine, leading to the formation of N6-(dimethylallyl)adenosine (i(6)A).</text>
</comment>
<comment type="catalytic activity">
    <reaction evidence="1">
        <text>adenosine(37) in tRNA + dimethylallyl diphosphate = N(6)-dimethylallyladenosine(37) in tRNA + diphosphate</text>
        <dbReference type="Rhea" id="RHEA:26482"/>
        <dbReference type="Rhea" id="RHEA-COMP:10162"/>
        <dbReference type="Rhea" id="RHEA-COMP:10375"/>
        <dbReference type="ChEBI" id="CHEBI:33019"/>
        <dbReference type="ChEBI" id="CHEBI:57623"/>
        <dbReference type="ChEBI" id="CHEBI:74411"/>
        <dbReference type="ChEBI" id="CHEBI:74415"/>
        <dbReference type="EC" id="2.5.1.75"/>
    </reaction>
</comment>
<comment type="cofactor">
    <cofactor evidence="1">
        <name>Mg(2+)</name>
        <dbReference type="ChEBI" id="CHEBI:18420"/>
    </cofactor>
</comment>
<comment type="subunit">
    <text evidence="1">Monomer.</text>
</comment>
<comment type="similarity">
    <text evidence="1">Belongs to the IPP transferase family.</text>
</comment>
<accession>Q9JZR0</accession>
<organism>
    <name type="scientific">Neisseria meningitidis serogroup B (strain ATCC BAA-335 / MC58)</name>
    <dbReference type="NCBI Taxonomy" id="122586"/>
    <lineage>
        <taxon>Bacteria</taxon>
        <taxon>Pseudomonadati</taxon>
        <taxon>Pseudomonadota</taxon>
        <taxon>Betaproteobacteria</taxon>
        <taxon>Neisseriales</taxon>
        <taxon>Neisseriaceae</taxon>
        <taxon>Neisseria</taxon>
    </lineage>
</organism>
<name>MIAA_NEIMB</name>
<feature type="chain" id="PRO_0000163944" description="tRNA dimethylallyltransferase">
    <location>
        <begin position="1"/>
        <end position="313"/>
    </location>
</feature>
<feature type="region of interest" description="Interaction with substrate tRNA" evidence="1">
    <location>
        <begin position="36"/>
        <end position="39"/>
    </location>
</feature>
<feature type="region of interest" description="Interaction with substrate tRNA" evidence="1">
    <location>
        <begin position="160"/>
        <end position="164"/>
    </location>
</feature>
<feature type="region of interest" description="Interaction with substrate tRNA" evidence="1">
    <location>
        <begin position="243"/>
        <end position="248"/>
    </location>
</feature>
<feature type="binding site" evidence="1">
    <location>
        <begin position="11"/>
        <end position="18"/>
    </location>
    <ligand>
        <name>ATP</name>
        <dbReference type="ChEBI" id="CHEBI:30616"/>
    </ligand>
</feature>
<feature type="binding site" evidence="1">
    <location>
        <begin position="13"/>
        <end position="18"/>
    </location>
    <ligand>
        <name>substrate</name>
    </ligand>
</feature>
<feature type="site" description="Interaction with substrate tRNA" evidence="1">
    <location>
        <position position="102"/>
    </location>
</feature>
<feature type="site" description="Interaction with substrate tRNA" evidence="1">
    <location>
        <position position="124"/>
    </location>
</feature>
<proteinExistence type="inferred from homology"/>
<evidence type="ECO:0000255" key="1">
    <source>
        <dbReference type="HAMAP-Rule" id="MF_00185"/>
    </source>
</evidence>
<protein>
    <recommendedName>
        <fullName evidence="1">tRNA dimethylallyltransferase</fullName>
        <ecNumber evidence="1">2.5.1.75</ecNumber>
    </recommendedName>
    <alternativeName>
        <fullName evidence="1">Dimethylallyl diphosphate:tRNA dimethylallyltransferase</fullName>
        <shortName evidence="1">DMAPP:tRNA dimethylallyltransferase</shortName>
        <shortName evidence="1">DMATase</shortName>
    </alternativeName>
    <alternativeName>
        <fullName evidence="1">Isopentenyl-diphosphate:tRNA isopentenyltransferase</fullName>
        <shortName evidence="1">IPP transferase</shortName>
        <shortName evidence="1">IPPT</shortName>
        <shortName evidence="1">IPTase</shortName>
    </alternativeName>
</protein>
<sequence>MPTPKAFALLGPTAGGKTALALKIAETLPVEIISLDSALVYRDMDIGTAKPSASERAFVPHHLIDIIPPTESYSAARFVEDCTRLVGEISSRGRFALIVGGTMMYFRALTQGLNDLPEADACLRADLDEQKQMYGLDFLYRTLQKVDPETACRLKPNDSQRIGRALEVYYLTGKPMSTHLGSLTSHTLPFDLHTAALIPENRARLHENIALRFHLMLEQGFIGEVENLRRRYPGLTAYSPAIRCVGYRQAWKYLDGKTDFPAFVEKGIAATRQLAKRQLTWLRKTPLDCVADPFSDCTSCTRLIEAAKRFFGA</sequence>
<gene>
    <name evidence="1" type="primary">miaA</name>
    <name type="ordered locus">NMB0935</name>
</gene>
<reference key="1">
    <citation type="journal article" date="2000" name="Science">
        <title>Complete genome sequence of Neisseria meningitidis serogroup B strain MC58.</title>
        <authorList>
            <person name="Tettelin H."/>
            <person name="Saunders N.J."/>
            <person name="Heidelberg J.F."/>
            <person name="Jeffries A.C."/>
            <person name="Nelson K.E."/>
            <person name="Eisen J.A."/>
            <person name="Ketchum K.A."/>
            <person name="Hood D.W."/>
            <person name="Peden J.F."/>
            <person name="Dodson R.J."/>
            <person name="Nelson W.C."/>
            <person name="Gwinn M.L."/>
            <person name="DeBoy R.T."/>
            <person name="Peterson J.D."/>
            <person name="Hickey E.K."/>
            <person name="Haft D.H."/>
            <person name="Salzberg S.L."/>
            <person name="White O."/>
            <person name="Fleischmann R.D."/>
            <person name="Dougherty B.A."/>
            <person name="Mason T.M."/>
            <person name="Ciecko A."/>
            <person name="Parksey D.S."/>
            <person name="Blair E."/>
            <person name="Cittone H."/>
            <person name="Clark E.B."/>
            <person name="Cotton M.D."/>
            <person name="Utterback T.R."/>
            <person name="Khouri H.M."/>
            <person name="Qin H."/>
            <person name="Vamathevan J.J."/>
            <person name="Gill J."/>
            <person name="Scarlato V."/>
            <person name="Masignani V."/>
            <person name="Pizza M."/>
            <person name="Grandi G."/>
            <person name="Sun L."/>
            <person name="Smith H.O."/>
            <person name="Fraser C.M."/>
            <person name="Moxon E.R."/>
            <person name="Rappuoli R."/>
            <person name="Venter J.C."/>
        </authorList>
    </citation>
    <scope>NUCLEOTIDE SEQUENCE [LARGE SCALE GENOMIC DNA]</scope>
    <source>
        <strain>ATCC BAA-335 / MC58</strain>
    </source>
</reference>
<keyword id="KW-0067">ATP-binding</keyword>
<keyword id="KW-0460">Magnesium</keyword>
<keyword id="KW-0547">Nucleotide-binding</keyword>
<keyword id="KW-1185">Reference proteome</keyword>
<keyword id="KW-0808">Transferase</keyword>
<keyword id="KW-0819">tRNA processing</keyword>
<dbReference type="EC" id="2.5.1.75" evidence="1"/>
<dbReference type="EMBL" id="AE002098">
    <property type="protein sequence ID" value="AAF41341.1"/>
    <property type="molecule type" value="Genomic_DNA"/>
</dbReference>
<dbReference type="PIR" id="A81142">
    <property type="entry name" value="A81142"/>
</dbReference>
<dbReference type="RefSeq" id="NP_273973.1">
    <property type="nucleotide sequence ID" value="NC_003112.2"/>
</dbReference>
<dbReference type="RefSeq" id="WP_002225331.1">
    <property type="nucleotide sequence ID" value="NC_003112.2"/>
</dbReference>
<dbReference type="SMR" id="Q9JZR0"/>
<dbReference type="FunCoup" id="Q9JZR0">
    <property type="interactions" value="436"/>
</dbReference>
<dbReference type="STRING" id="122586.NMB0935"/>
<dbReference type="PaxDb" id="122586-NMB0935"/>
<dbReference type="KEGG" id="nme:NMB0935"/>
<dbReference type="PATRIC" id="fig|122586.8.peg.1183"/>
<dbReference type="HOGENOM" id="CLU_032616_0_0_4"/>
<dbReference type="InParanoid" id="Q9JZR0"/>
<dbReference type="OrthoDB" id="9776390at2"/>
<dbReference type="Proteomes" id="UP000000425">
    <property type="component" value="Chromosome"/>
</dbReference>
<dbReference type="GO" id="GO:0005524">
    <property type="term" value="F:ATP binding"/>
    <property type="evidence" value="ECO:0007669"/>
    <property type="project" value="UniProtKB-UniRule"/>
</dbReference>
<dbReference type="GO" id="GO:0052381">
    <property type="term" value="F:tRNA dimethylallyltransferase activity"/>
    <property type="evidence" value="ECO:0000318"/>
    <property type="project" value="GO_Central"/>
</dbReference>
<dbReference type="GO" id="GO:0006400">
    <property type="term" value="P:tRNA modification"/>
    <property type="evidence" value="ECO:0000318"/>
    <property type="project" value="GO_Central"/>
</dbReference>
<dbReference type="Gene3D" id="1.10.20.140">
    <property type="match status" value="1"/>
</dbReference>
<dbReference type="Gene3D" id="3.40.50.300">
    <property type="entry name" value="P-loop containing nucleotide triphosphate hydrolases"/>
    <property type="match status" value="1"/>
</dbReference>
<dbReference type="HAMAP" id="MF_00185">
    <property type="entry name" value="IPP_trans"/>
    <property type="match status" value="1"/>
</dbReference>
<dbReference type="InterPro" id="IPR039657">
    <property type="entry name" value="Dimethylallyltransferase"/>
</dbReference>
<dbReference type="InterPro" id="IPR018022">
    <property type="entry name" value="IPT"/>
</dbReference>
<dbReference type="InterPro" id="IPR027417">
    <property type="entry name" value="P-loop_NTPase"/>
</dbReference>
<dbReference type="NCBIfam" id="TIGR00174">
    <property type="entry name" value="miaA"/>
    <property type="match status" value="1"/>
</dbReference>
<dbReference type="PANTHER" id="PTHR11088">
    <property type="entry name" value="TRNA DIMETHYLALLYLTRANSFERASE"/>
    <property type="match status" value="1"/>
</dbReference>
<dbReference type="PANTHER" id="PTHR11088:SF60">
    <property type="entry name" value="TRNA DIMETHYLALLYLTRANSFERASE"/>
    <property type="match status" value="1"/>
</dbReference>
<dbReference type="Pfam" id="PF01715">
    <property type="entry name" value="IPPT"/>
    <property type="match status" value="1"/>
</dbReference>
<dbReference type="SUPFAM" id="SSF52540">
    <property type="entry name" value="P-loop containing nucleoside triphosphate hydrolases"/>
    <property type="match status" value="1"/>
</dbReference>